<comment type="alternative products">
    <event type="alternative splicing"/>
    <isoform>
        <id>Q14DL3-1</id>
        <name>1</name>
        <sequence type="displayed"/>
    </isoform>
    <isoform>
        <id>Q14DL3-2</id>
        <name>2</name>
        <sequence type="described" ref="VSP_029412 VSP_029413"/>
    </isoform>
    <isoform>
        <id>Q14DL3-3</id>
        <name>3</name>
        <sequence type="described" ref="VSP_029414 VSP_029415"/>
    </isoform>
</comment>
<comment type="sequence caution" evidence="5">
    <conflict type="frameshift">
        <sequence resource="EMBL-CDS" id="BAB30350"/>
    </conflict>
</comment>
<protein>
    <recommendedName>
        <fullName>Leucine-rich repeat and IQ domain-containing protein 3</fullName>
    </recommendedName>
    <alternativeName>
        <fullName>Leucine-rich repeat-containing protein 44</fullName>
    </alternativeName>
</protein>
<evidence type="ECO:0000255" key="1"/>
<evidence type="ECO:0000255" key="2">
    <source>
        <dbReference type="PROSITE-ProRule" id="PRU00116"/>
    </source>
</evidence>
<evidence type="ECO:0000256" key="3">
    <source>
        <dbReference type="SAM" id="MobiDB-lite"/>
    </source>
</evidence>
<evidence type="ECO:0000303" key="4">
    <source>
    </source>
</evidence>
<evidence type="ECO:0000305" key="5"/>
<reference key="1">
    <citation type="journal article" date="2005" name="Science">
        <title>The transcriptional landscape of the mammalian genome.</title>
        <authorList>
            <person name="Carninci P."/>
            <person name="Kasukawa T."/>
            <person name="Katayama S."/>
            <person name="Gough J."/>
            <person name="Frith M.C."/>
            <person name="Maeda N."/>
            <person name="Oyama R."/>
            <person name="Ravasi T."/>
            <person name="Lenhard B."/>
            <person name="Wells C."/>
            <person name="Kodzius R."/>
            <person name="Shimokawa K."/>
            <person name="Bajic V.B."/>
            <person name="Brenner S.E."/>
            <person name="Batalov S."/>
            <person name="Forrest A.R."/>
            <person name="Zavolan M."/>
            <person name="Davis M.J."/>
            <person name="Wilming L.G."/>
            <person name="Aidinis V."/>
            <person name="Allen J.E."/>
            <person name="Ambesi-Impiombato A."/>
            <person name="Apweiler R."/>
            <person name="Aturaliya R.N."/>
            <person name="Bailey T.L."/>
            <person name="Bansal M."/>
            <person name="Baxter L."/>
            <person name="Beisel K.W."/>
            <person name="Bersano T."/>
            <person name="Bono H."/>
            <person name="Chalk A.M."/>
            <person name="Chiu K.P."/>
            <person name="Choudhary V."/>
            <person name="Christoffels A."/>
            <person name="Clutterbuck D.R."/>
            <person name="Crowe M.L."/>
            <person name="Dalla E."/>
            <person name="Dalrymple B.P."/>
            <person name="de Bono B."/>
            <person name="Della Gatta G."/>
            <person name="di Bernardo D."/>
            <person name="Down T."/>
            <person name="Engstrom P."/>
            <person name="Fagiolini M."/>
            <person name="Faulkner G."/>
            <person name="Fletcher C.F."/>
            <person name="Fukushima T."/>
            <person name="Furuno M."/>
            <person name="Futaki S."/>
            <person name="Gariboldi M."/>
            <person name="Georgii-Hemming P."/>
            <person name="Gingeras T.R."/>
            <person name="Gojobori T."/>
            <person name="Green R.E."/>
            <person name="Gustincich S."/>
            <person name="Harbers M."/>
            <person name="Hayashi Y."/>
            <person name="Hensch T.K."/>
            <person name="Hirokawa N."/>
            <person name="Hill D."/>
            <person name="Huminiecki L."/>
            <person name="Iacono M."/>
            <person name="Ikeo K."/>
            <person name="Iwama A."/>
            <person name="Ishikawa T."/>
            <person name="Jakt M."/>
            <person name="Kanapin A."/>
            <person name="Katoh M."/>
            <person name="Kawasawa Y."/>
            <person name="Kelso J."/>
            <person name="Kitamura H."/>
            <person name="Kitano H."/>
            <person name="Kollias G."/>
            <person name="Krishnan S.P."/>
            <person name="Kruger A."/>
            <person name="Kummerfeld S.K."/>
            <person name="Kurochkin I.V."/>
            <person name="Lareau L.F."/>
            <person name="Lazarevic D."/>
            <person name="Lipovich L."/>
            <person name="Liu J."/>
            <person name="Liuni S."/>
            <person name="McWilliam S."/>
            <person name="Madan Babu M."/>
            <person name="Madera M."/>
            <person name="Marchionni L."/>
            <person name="Matsuda H."/>
            <person name="Matsuzawa S."/>
            <person name="Miki H."/>
            <person name="Mignone F."/>
            <person name="Miyake S."/>
            <person name="Morris K."/>
            <person name="Mottagui-Tabar S."/>
            <person name="Mulder N."/>
            <person name="Nakano N."/>
            <person name="Nakauchi H."/>
            <person name="Ng P."/>
            <person name="Nilsson R."/>
            <person name="Nishiguchi S."/>
            <person name="Nishikawa S."/>
            <person name="Nori F."/>
            <person name="Ohara O."/>
            <person name="Okazaki Y."/>
            <person name="Orlando V."/>
            <person name="Pang K.C."/>
            <person name="Pavan W.J."/>
            <person name="Pavesi G."/>
            <person name="Pesole G."/>
            <person name="Petrovsky N."/>
            <person name="Piazza S."/>
            <person name="Reed J."/>
            <person name="Reid J.F."/>
            <person name="Ring B.Z."/>
            <person name="Ringwald M."/>
            <person name="Rost B."/>
            <person name="Ruan Y."/>
            <person name="Salzberg S.L."/>
            <person name="Sandelin A."/>
            <person name="Schneider C."/>
            <person name="Schoenbach C."/>
            <person name="Sekiguchi K."/>
            <person name="Semple C.A."/>
            <person name="Seno S."/>
            <person name="Sessa L."/>
            <person name="Sheng Y."/>
            <person name="Shibata Y."/>
            <person name="Shimada H."/>
            <person name="Shimada K."/>
            <person name="Silva D."/>
            <person name="Sinclair B."/>
            <person name="Sperling S."/>
            <person name="Stupka E."/>
            <person name="Sugiura K."/>
            <person name="Sultana R."/>
            <person name="Takenaka Y."/>
            <person name="Taki K."/>
            <person name="Tammoja K."/>
            <person name="Tan S.L."/>
            <person name="Tang S."/>
            <person name="Taylor M.S."/>
            <person name="Tegner J."/>
            <person name="Teichmann S.A."/>
            <person name="Ueda H.R."/>
            <person name="van Nimwegen E."/>
            <person name="Verardo R."/>
            <person name="Wei C.L."/>
            <person name="Yagi K."/>
            <person name="Yamanishi H."/>
            <person name="Zabarovsky E."/>
            <person name="Zhu S."/>
            <person name="Zimmer A."/>
            <person name="Hide W."/>
            <person name="Bult C."/>
            <person name="Grimmond S.M."/>
            <person name="Teasdale R.D."/>
            <person name="Liu E.T."/>
            <person name="Brusic V."/>
            <person name="Quackenbush J."/>
            <person name="Wahlestedt C."/>
            <person name="Mattick J.S."/>
            <person name="Hume D.A."/>
            <person name="Kai C."/>
            <person name="Sasaki D."/>
            <person name="Tomaru Y."/>
            <person name="Fukuda S."/>
            <person name="Kanamori-Katayama M."/>
            <person name="Suzuki M."/>
            <person name="Aoki J."/>
            <person name="Arakawa T."/>
            <person name="Iida J."/>
            <person name="Imamura K."/>
            <person name="Itoh M."/>
            <person name="Kato T."/>
            <person name="Kawaji H."/>
            <person name="Kawagashira N."/>
            <person name="Kawashima T."/>
            <person name="Kojima M."/>
            <person name="Kondo S."/>
            <person name="Konno H."/>
            <person name="Nakano K."/>
            <person name="Ninomiya N."/>
            <person name="Nishio T."/>
            <person name="Okada M."/>
            <person name="Plessy C."/>
            <person name="Shibata K."/>
            <person name="Shiraki T."/>
            <person name="Suzuki S."/>
            <person name="Tagami M."/>
            <person name="Waki K."/>
            <person name="Watahiki A."/>
            <person name="Okamura-Oho Y."/>
            <person name="Suzuki H."/>
            <person name="Kawai J."/>
            <person name="Hayashizaki Y."/>
        </authorList>
    </citation>
    <scope>NUCLEOTIDE SEQUENCE [LARGE SCALE MRNA] (ISOFORMS 2 AND 3)</scope>
    <source>
        <strain>C57BL/6J</strain>
        <tissue>Oviduct</tissue>
        <tissue>Testis</tissue>
    </source>
</reference>
<reference key="2">
    <citation type="journal article" date="2004" name="Genome Res.">
        <title>The status, quality, and expansion of the NIH full-length cDNA project: the Mammalian Gene Collection (MGC).</title>
        <authorList>
            <consortium name="The MGC Project Team"/>
        </authorList>
    </citation>
    <scope>NUCLEOTIDE SEQUENCE [LARGE SCALE MRNA] (ISOFORM 1)</scope>
</reference>
<name>LRIQ3_MOUSE</name>
<gene>
    <name type="primary">Lrriq3</name>
    <name type="synonym">Lrrc44</name>
</gene>
<feature type="chain" id="PRO_0000311195" description="Leucine-rich repeat and IQ domain-containing protein 3">
    <location>
        <begin position="1"/>
        <end position="633"/>
    </location>
</feature>
<feature type="repeat" description="LRR 1">
    <location>
        <begin position="51"/>
        <end position="72"/>
    </location>
</feature>
<feature type="repeat" description="LRR 2">
    <location>
        <begin position="73"/>
        <end position="94"/>
    </location>
</feature>
<feature type="repeat" description="LRR 3">
    <location>
        <begin position="98"/>
        <end position="119"/>
    </location>
</feature>
<feature type="domain" description="LRRCT">
    <location>
        <begin position="132"/>
        <end position="179"/>
    </location>
</feature>
<feature type="domain" description="IQ" evidence="2">
    <location>
        <begin position="215"/>
        <end position="244"/>
    </location>
</feature>
<feature type="region of interest" description="Disordered" evidence="3">
    <location>
        <begin position="324"/>
        <end position="343"/>
    </location>
</feature>
<feature type="coiled-coil region" evidence="1">
    <location>
        <begin position="556"/>
        <end position="617"/>
    </location>
</feature>
<feature type="compositionally biased region" description="Basic residues" evidence="3">
    <location>
        <begin position="325"/>
        <end position="336"/>
    </location>
</feature>
<feature type="splice variant" id="VSP_029414" description="In isoform 3." evidence="4">
    <original>MRYSPADFKY</original>
    <variation>DKTKLWVNFH</variation>
    <location>
        <begin position="291"/>
        <end position="300"/>
    </location>
</feature>
<feature type="splice variant" id="VSP_029415" description="In isoform 3." evidence="4">
    <location>
        <begin position="301"/>
        <end position="633"/>
    </location>
</feature>
<feature type="splice variant" id="VSP_029412" description="In isoform 2." evidence="4">
    <original>QKAMKAESEDE</original>
    <variation>LEGFKCSFLDA</variation>
    <location>
        <begin position="335"/>
        <end position="345"/>
    </location>
</feature>
<feature type="splice variant" id="VSP_029413" description="In isoform 2." evidence="4">
    <location>
        <begin position="346"/>
        <end position="633"/>
    </location>
</feature>
<feature type="sequence conflict" description="In Ref. 1; BAB30350." evidence="5" ref="1">
    <original>Y</original>
    <variation>H</variation>
    <location>
        <position position="19"/>
    </location>
</feature>
<sequence length="633" mass="75364">MFHGTITKELTSHEEWSHYNENIIEDQKDFVFVKYSGLHLKSMENLQTCISLRVCIFSNNFLTDIQPLQSCKKLIKLDLHGNQIKTLPDKNFWSGLKNLKLLYLHDNGFSKLKNICVLSGCVSLIGLTMFDCPVSLKKGYRHVLVNSIWPLKALDHHVISDEEIIQNWRLPERFKTFSPSLFFNLYPALIKGTTYEDEIKNIKHIISRINEILAHNSPVLIIQRWIRGFIVRKHLSPYFKHKKHYHGKMIRVLETKLICIGRSDEDKYLEDFFFIKPECNIKGKVAHWKQMRYSPADFKYSTEYGKHISCLSYELKTKYIDGKSKQPRHHIHKGQKAMKAESEDEEVDTEFRISAMKIPLYSSRSLKYGAMLKEMKWDYFPQYLQPFPATRQKPPVKRETLWKLKKRREFLATQRAGMKLHMFDDVDKYYSEQKQHEEEARKFAAMVTAQVTQERASVNIREKLNKKIYMTRKLMEKDNETIQKGLQQIWRERLAYLEKVRERKFMFLAEKKLNAADQSLVISLNNERSILLKGITQVERLKKHMSEKKAKHLDVIEKWEEQKYKQDLLMEMKKLRVEEIQKRHCEEKFVIDTLILQKGYERLEEAKAKVEYIKTFYTSKSHKRRNEAMPDHI</sequence>
<proteinExistence type="evidence at transcript level"/>
<keyword id="KW-0025">Alternative splicing</keyword>
<keyword id="KW-0175">Coiled coil</keyword>
<keyword id="KW-0433">Leucine-rich repeat</keyword>
<keyword id="KW-1185">Reference proteome</keyword>
<keyword id="KW-0677">Repeat</keyword>
<organism>
    <name type="scientific">Mus musculus</name>
    <name type="common">Mouse</name>
    <dbReference type="NCBI Taxonomy" id="10090"/>
    <lineage>
        <taxon>Eukaryota</taxon>
        <taxon>Metazoa</taxon>
        <taxon>Chordata</taxon>
        <taxon>Craniata</taxon>
        <taxon>Vertebrata</taxon>
        <taxon>Euteleostomi</taxon>
        <taxon>Mammalia</taxon>
        <taxon>Eutheria</taxon>
        <taxon>Euarchontoglires</taxon>
        <taxon>Glires</taxon>
        <taxon>Rodentia</taxon>
        <taxon>Myomorpha</taxon>
        <taxon>Muroidea</taxon>
        <taxon>Muridae</taxon>
        <taxon>Murinae</taxon>
        <taxon>Mus</taxon>
        <taxon>Mus</taxon>
    </lineage>
</organism>
<accession>Q14DL3</accession>
<accession>Q9D4C3</accession>
<accession>Q9D562</accession>
<accession>Q9D5I0</accession>
<dbReference type="EMBL" id="AK015333">
    <property type="protein sequence ID" value="BAB29800.1"/>
    <property type="molecule type" value="mRNA"/>
</dbReference>
<dbReference type="EMBL" id="AK015758">
    <property type="protein sequence ID" value="BAB29962.1"/>
    <property type="molecule type" value="mRNA"/>
</dbReference>
<dbReference type="EMBL" id="AK016634">
    <property type="protein sequence ID" value="BAB30350.1"/>
    <property type="status" value="ALT_FRAME"/>
    <property type="molecule type" value="mRNA"/>
</dbReference>
<dbReference type="EMBL" id="BC112424">
    <property type="protein sequence ID" value="AAI12425.1"/>
    <property type="molecule type" value="mRNA"/>
</dbReference>
<dbReference type="EMBL" id="BC113130">
    <property type="protein sequence ID" value="AAI13131.1"/>
    <property type="molecule type" value="mRNA"/>
</dbReference>
<dbReference type="CCDS" id="CCDS38682.1">
    <molecule id="Q14DL3-1"/>
</dbReference>
<dbReference type="RefSeq" id="NP_083214.2">
    <molecule id="Q14DL3-1"/>
    <property type="nucleotide sequence ID" value="NM_028938.2"/>
</dbReference>
<dbReference type="RefSeq" id="XP_006502252.1">
    <molecule id="Q14DL3-1"/>
    <property type="nucleotide sequence ID" value="XM_006502189.3"/>
</dbReference>
<dbReference type="RefSeq" id="XP_006502253.1">
    <molecule id="Q14DL3-2"/>
    <property type="nucleotide sequence ID" value="XM_006502190.5"/>
</dbReference>
<dbReference type="BioGRID" id="216745">
    <property type="interactions" value="1"/>
</dbReference>
<dbReference type="FunCoup" id="Q14DL3">
    <property type="interactions" value="3"/>
</dbReference>
<dbReference type="STRING" id="10090.ENSMUSP00000029833"/>
<dbReference type="iPTMnet" id="Q14DL3"/>
<dbReference type="PhosphoSitePlus" id="Q14DL3"/>
<dbReference type="PaxDb" id="10090-ENSMUSP00000029833"/>
<dbReference type="ProteomicsDB" id="292037">
    <molecule id="Q14DL3-1"/>
</dbReference>
<dbReference type="ProteomicsDB" id="292038">
    <molecule id="Q14DL3-2"/>
</dbReference>
<dbReference type="ProteomicsDB" id="292039">
    <molecule id="Q14DL3-3"/>
</dbReference>
<dbReference type="Antibodypedia" id="33447">
    <property type="antibodies" value="103 antibodies from 16 providers"/>
</dbReference>
<dbReference type="DNASU" id="74435"/>
<dbReference type="Ensembl" id="ENSMUST00000029833.13">
    <molecule id="Q14DL3-1"/>
    <property type="protein sequence ID" value="ENSMUSP00000029833.8"/>
    <property type="gene ID" value="ENSMUSG00000028182.15"/>
</dbReference>
<dbReference type="Ensembl" id="ENSMUST00000192383.6">
    <molecule id="Q14DL3-2"/>
    <property type="protein sequence ID" value="ENSMUSP00000141372.2"/>
    <property type="gene ID" value="ENSMUSG00000028182.15"/>
</dbReference>
<dbReference type="Ensembl" id="ENSMUST00000194376.2">
    <molecule id="Q14DL3-3"/>
    <property type="protein sequence ID" value="ENSMUSP00000142127.2"/>
    <property type="gene ID" value="ENSMUSG00000028182.15"/>
</dbReference>
<dbReference type="GeneID" id="74435"/>
<dbReference type="KEGG" id="mmu:74435"/>
<dbReference type="UCSC" id="uc008ruw.1">
    <molecule id="Q14DL3-3"/>
    <property type="organism name" value="mouse"/>
</dbReference>
<dbReference type="UCSC" id="uc008rux.1">
    <molecule id="Q14DL3-1"/>
    <property type="organism name" value="mouse"/>
</dbReference>
<dbReference type="AGR" id="MGI:1921685"/>
<dbReference type="CTD" id="127255"/>
<dbReference type="MGI" id="MGI:1921685">
    <property type="gene designation" value="Lrriq3"/>
</dbReference>
<dbReference type="VEuPathDB" id="HostDB:ENSMUSG00000028182"/>
<dbReference type="eggNOG" id="KOG0531">
    <property type="taxonomic scope" value="Eukaryota"/>
</dbReference>
<dbReference type="GeneTree" id="ENSGT00390000004404"/>
<dbReference type="HOGENOM" id="CLU_029934_0_0_1"/>
<dbReference type="InParanoid" id="Q14DL3"/>
<dbReference type="OMA" id="KLPICTS"/>
<dbReference type="OrthoDB" id="676979at2759"/>
<dbReference type="PhylomeDB" id="Q14DL3"/>
<dbReference type="TreeFam" id="TF329557"/>
<dbReference type="BioGRID-ORCS" id="74435">
    <property type="hits" value="1 hit in 76 CRISPR screens"/>
</dbReference>
<dbReference type="ChiTaRS" id="Lrriq3">
    <property type="organism name" value="mouse"/>
</dbReference>
<dbReference type="PRO" id="PR:Q14DL3"/>
<dbReference type="Proteomes" id="UP000000589">
    <property type="component" value="Chromosome 3"/>
</dbReference>
<dbReference type="RNAct" id="Q14DL3">
    <property type="molecule type" value="protein"/>
</dbReference>
<dbReference type="Bgee" id="ENSMUSG00000028182">
    <property type="expression patterns" value="Expressed in spermatid and 107 other cell types or tissues"/>
</dbReference>
<dbReference type="Gene3D" id="3.80.10.10">
    <property type="entry name" value="Ribonuclease Inhibitor"/>
    <property type="match status" value="1"/>
</dbReference>
<dbReference type="InterPro" id="IPR001611">
    <property type="entry name" value="Leu-rich_rpt"/>
</dbReference>
<dbReference type="InterPro" id="IPR025875">
    <property type="entry name" value="Leu-rich_rpt_4"/>
</dbReference>
<dbReference type="InterPro" id="IPR052859">
    <property type="entry name" value="LRR-IQ_domain_protein"/>
</dbReference>
<dbReference type="InterPro" id="IPR032675">
    <property type="entry name" value="LRR_dom_sf"/>
</dbReference>
<dbReference type="PANTHER" id="PTHR46723">
    <property type="entry name" value="LEUCINE-RICH REPEAT AND IQ DOMAIN-CONTAINING PROTEIN 3"/>
    <property type="match status" value="1"/>
</dbReference>
<dbReference type="PANTHER" id="PTHR46723:SF1">
    <property type="entry name" value="LEUCINE-RICH REPEAT AND IQ DOMAIN-CONTAINING PROTEIN 3"/>
    <property type="match status" value="1"/>
</dbReference>
<dbReference type="Pfam" id="PF12799">
    <property type="entry name" value="LRR_4"/>
    <property type="match status" value="1"/>
</dbReference>
<dbReference type="SUPFAM" id="SSF52058">
    <property type="entry name" value="L domain-like"/>
    <property type="match status" value="1"/>
</dbReference>
<dbReference type="PROSITE" id="PS50096">
    <property type="entry name" value="IQ"/>
    <property type="match status" value="1"/>
</dbReference>
<dbReference type="PROSITE" id="PS51450">
    <property type="entry name" value="LRR"/>
    <property type="match status" value="3"/>
</dbReference>